<protein>
    <recommendedName>
        <fullName>Ras modification protein ERF4</fullName>
    </recommendedName>
</protein>
<evidence type="ECO:0000250" key="1">
    <source>
        <dbReference type="UniProtKB" id="P41912"/>
    </source>
</evidence>
<evidence type="ECO:0000305" key="2"/>
<feature type="chain" id="PRO_0000213982" description="Ras modification protein ERF4">
    <location>
        <begin position="1"/>
        <end position="218"/>
    </location>
</feature>
<organism>
    <name type="scientific">Candida albicans (strain SC5314 / ATCC MYA-2876)</name>
    <name type="common">Yeast</name>
    <dbReference type="NCBI Taxonomy" id="237561"/>
    <lineage>
        <taxon>Eukaryota</taxon>
        <taxon>Fungi</taxon>
        <taxon>Dikarya</taxon>
        <taxon>Ascomycota</taxon>
        <taxon>Saccharomycotina</taxon>
        <taxon>Pichiomycetes</taxon>
        <taxon>Debaryomycetaceae</taxon>
        <taxon>Candida/Lodderomyces clade</taxon>
        <taxon>Candida</taxon>
    </lineage>
</organism>
<gene>
    <name type="primary">ERF4</name>
    <name type="synonym">SHR5</name>
    <name type="ordered locus">CAALFM_C501170WA</name>
    <name type="ORF">CaO19.1955</name>
    <name type="ORF">CaO19.9510</name>
</gene>
<sequence>MNETKTDSTVNPDQSSQELVFFNYHEYLVPGSDDTSLVINHFPNIHTDLSSSTFKETRIIRIPRVYHTVQFPDLIPQFSCYYPGSEPGAITSTQLMSGSFDDNSFNESSSIPSLENIISRSEFENIVSLVNESLAVAFNPMSKRMLLENLLDLLSGGLFLSLLNFLGIYSFTKRKLMELESQIDSINQINEKKGVDFKIISPRVTGYLSLDFQITKPR</sequence>
<dbReference type="EMBL" id="CP017627">
    <property type="protein sequence ID" value="AOW29552.1"/>
    <property type="molecule type" value="Genomic_DNA"/>
</dbReference>
<dbReference type="RefSeq" id="XP_019330955.1">
    <property type="nucleotide sequence ID" value="XM_019475410.1"/>
</dbReference>
<dbReference type="SMR" id="Q5A1U8"/>
<dbReference type="FunCoup" id="Q5A1U8">
    <property type="interactions" value="43"/>
</dbReference>
<dbReference type="STRING" id="237561.Q5A1U8"/>
<dbReference type="EnsemblFungi" id="C5_01170W_A-T">
    <property type="protein sequence ID" value="C5_01170W_A-T-p1"/>
    <property type="gene ID" value="C5_01170W_A"/>
</dbReference>
<dbReference type="GeneID" id="3642662"/>
<dbReference type="KEGG" id="cal:CAALFM_C501170WA"/>
<dbReference type="CGD" id="CAL0000178317">
    <property type="gene designation" value="orf19.9510"/>
</dbReference>
<dbReference type="VEuPathDB" id="FungiDB:C5_01170W_A"/>
<dbReference type="eggNOG" id="ENOG502S30T">
    <property type="taxonomic scope" value="Eukaryota"/>
</dbReference>
<dbReference type="HOGENOM" id="CLU_087349_0_0_1"/>
<dbReference type="InParanoid" id="Q5A1U8"/>
<dbReference type="OMA" id="CITHFPN"/>
<dbReference type="OrthoDB" id="5377273at2759"/>
<dbReference type="PRO" id="PR:Q5A1U8"/>
<dbReference type="Proteomes" id="UP000000559">
    <property type="component" value="Chromosome 5"/>
</dbReference>
<dbReference type="GO" id="GO:0005789">
    <property type="term" value="C:endoplasmic reticulum membrane"/>
    <property type="evidence" value="ECO:0007669"/>
    <property type="project" value="UniProtKB-SubCell"/>
</dbReference>
<dbReference type="GO" id="GO:0031211">
    <property type="term" value="C:endoplasmic reticulum palmitoyltransferase complex"/>
    <property type="evidence" value="ECO:0000318"/>
    <property type="project" value="GO_Central"/>
</dbReference>
<dbReference type="GO" id="GO:0006612">
    <property type="term" value="P:protein targeting to membrane"/>
    <property type="evidence" value="ECO:0000318"/>
    <property type="project" value="GO_Central"/>
</dbReference>
<dbReference type="InterPro" id="IPR019383">
    <property type="entry name" value="Golgin_A_7/ERF4"/>
</dbReference>
<dbReference type="InterPro" id="IPR051371">
    <property type="entry name" value="Ras_palmitoyltransferase"/>
</dbReference>
<dbReference type="PANTHER" id="PTHR13254">
    <property type="entry name" value="GOLGI AUTOANTIGEN, GOLGIN SUBFAMILY A, 7"/>
    <property type="match status" value="1"/>
</dbReference>
<dbReference type="PANTHER" id="PTHR13254:SF0">
    <property type="entry name" value="GOLGIN SUBFAMILY A MEMBER 7_ERF4 DOMAIN-CONTAINING PROTEIN"/>
    <property type="match status" value="1"/>
</dbReference>
<dbReference type="Pfam" id="PF10256">
    <property type="entry name" value="Erf4"/>
    <property type="match status" value="1"/>
</dbReference>
<reference key="1">
    <citation type="journal article" date="2004" name="Proc. Natl. Acad. Sci. U.S.A.">
        <title>The diploid genome sequence of Candida albicans.</title>
        <authorList>
            <person name="Jones T."/>
            <person name="Federspiel N.A."/>
            <person name="Chibana H."/>
            <person name="Dungan J."/>
            <person name="Kalman S."/>
            <person name="Magee B.B."/>
            <person name="Newport G."/>
            <person name="Thorstenson Y.R."/>
            <person name="Agabian N."/>
            <person name="Magee P.T."/>
            <person name="Davis R.W."/>
            <person name="Scherer S."/>
        </authorList>
    </citation>
    <scope>NUCLEOTIDE SEQUENCE [LARGE SCALE GENOMIC DNA]</scope>
    <source>
        <strain>SC5314 / ATCC MYA-2876</strain>
    </source>
</reference>
<reference key="2">
    <citation type="journal article" date="2007" name="Genome Biol.">
        <title>Assembly of the Candida albicans genome into sixteen supercontigs aligned on the eight chromosomes.</title>
        <authorList>
            <person name="van het Hoog M."/>
            <person name="Rast T.J."/>
            <person name="Martchenko M."/>
            <person name="Grindle S."/>
            <person name="Dignard D."/>
            <person name="Hogues H."/>
            <person name="Cuomo C."/>
            <person name="Berriman M."/>
            <person name="Scherer S."/>
            <person name="Magee B.B."/>
            <person name="Whiteway M."/>
            <person name="Chibana H."/>
            <person name="Nantel A."/>
            <person name="Magee P.T."/>
        </authorList>
    </citation>
    <scope>GENOME REANNOTATION</scope>
    <source>
        <strain>SC5314 / ATCC MYA-2876</strain>
    </source>
</reference>
<reference key="3">
    <citation type="journal article" date="2013" name="Genome Biol.">
        <title>Assembly of a phased diploid Candida albicans genome facilitates allele-specific measurements and provides a simple model for repeat and indel structure.</title>
        <authorList>
            <person name="Muzzey D."/>
            <person name="Schwartz K."/>
            <person name="Weissman J.S."/>
            <person name="Sherlock G."/>
        </authorList>
    </citation>
    <scope>NUCLEOTIDE SEQUENCE [LARGE SCALE GENOMIC DNA]</scope>
    <scope>GENOME REANNOTATION</scope>
    <source>
        <strain>SC5314 / ATCC MYA-2876</strain>
    </source>
</reference>
<comment type="function">
    <text evidence="1">The ERF2-ERF4 complex is a palmitoyltransferase specific for Ras proteins. Palmitoylates RAS2, which is required for its proper plasma membrane localization (By similarity).</text>
</comment>
<comment type="subunit">
    <text evidence="1">Interacts with ERF2.</text>
</comment>
<comment type="subcellular location">
    <subcellularLocation>
        <location evidence="1">Endoplasmic reticulum membrane</location>
        <topology evidence="1">Peripheral membrane protein</topology>
    </subcellularLocation>
</comment>
<comment type="similarity">
    <text evidence="2">Belongs to the ERF4 family.</text>
</comment>
<name>ERFD_CANAL</name>
<accession>Q5A1U8</accession>
<accession>A0A1D8PN33</accession>
<accession>Q5A1P1</accession>
<proteinExistence type="inferred from homology"/>
<keyword id="KW-0256">Endoplasmic reticulum</keyword>
<keyword id="KW-0472">Membrane</keyword>
<keyword id="KW-1185">Reference proteome</keyword>